<accession>B1MDU8</accession>
<keyword id="KW-0067">ATP-binding</keyword>
<keyword id="KW-0436">Ligase</keyword>
<keyword id="KW-0547">Nucleotide-binding</keyword>
<keyword id="KW-0648">Protein biosynthesis</keyword>
<keyword id="KW-1185">Reference proteome</keyword>
<comment type="function">
    <text evidence="1">Allows the formation of correctly charged Gln-tRNA(Gln) through the transamidation of misacylated Glu-tRNA(Gln) in organisms which lack glutaminyl-tRNA synthetase. The reaction takes place in the presence of glutamine and ATP through an activated gamma-phospho-Glu-tRNA(Gln).</text>
</comment>
<comment type="catalytic activity">
    <reaction evidence="1">
        <text>L-glutamyl-tRNA(Gln) + L-glutamine + ATP + H2O = L-glutaminyl-tRNA(Gln) + L-glutamate + ADP + phosphate + H(+)</text>
        <dbReference type="Rhea" id="RHEA:17521"/>
        <dbReference type="Rhea" id="RHEA-COMP:9681"/>
        <dbReference type="Rhea" id="RHEA-COMP:9684"/>
        <dbReference type="ChEBI" id="CHEBI:15377"/>
        <dbReference type="ChEBI" id="CHEBI:15378"/>
        <dbReference type="ChEBI" id="CHEBI:29985"/>
        <dbReference type="ChEBI" id="CHEBI:30616"/>
        <dbReference type="ChEBI" id="CHEBI:43474"/>
        <dbReference type="ChEBI" id="CHEBI:58359"/>
        <dbReference type="ChEBI" id="CHEBI:78520"/>
        <dbReference type="ChEBI" id="CHEBI:78521"/>
        <dbReference type="ChEBI" id="CHEBI:456216"/>
        <dbReference type="EC" id="6.3.5.7"/>
    </reaction>
</comment>
<comment type="subunit">
    <text evidence="1">Heterotrimer of A, B and C subunits.</text>
</comment>
<comment type="similarity">
    <text evidence="1">Belongs to the amidase family. GatA subfamily.</text>
</comment>
<name>GATA_MYCA9</name>
<evidence type="ECO:0000255" key="1">
    <source>
        <dbReference type="HAMAP-Rule" id="MF_00120"/>
    </source>
</evidence>
<organism>
    <name type="scientific">Mycobacteroides abscessus (strain ATCC 19977 / DSM 44196 / CCUG 20993 / CIP 104536 / JCM 13569 / NCTC 13031 / TMC 1543 / L948)</name>
    <name type="common">Mycobacterium abscessus</name>
    <dbReference type="NCBI Taxonomy" id="561007"/>
    <lineage>
        <taxon>Bacteria</taxon>
        <taxon>Bacillati</taxon>
        <taxon>Actinomycetota</taxon>
        <taxon>Actinomycetes</taxon>
        <taxon>Mycobacteriales</taxon>
        <taxon>Mycobacteriaceae</taxon>
        <taxon>Mycobacteroides</taxon>
        <taxon>Mycobacteroides abscessus</taxon>
    </lineage>
</organism>
<protein>
    <recommendedName>
        <fullName evidence="1">Glutamyl-tRNA(Gln) amidotransferase subunit A</fullName>
        <shortName evidence="1">Glu-ADT subunit A</shortName>
        <ecNumber evidence="1">6.3.5.7</ecNumber>
    </recommendedName>
</protein>
<feature type="chain" id="PRO_1000095151" description="Glutamyl-tRNA(Gln) amidotransferase subunit A">
    <location>
        <begin position="1"/>
        <end position="492"/>
    </location>
</feature>
<feature type="active site" description="Charge relay system" evidence="1">
    <location>
        <position position="80"/>
    </location>
</feature>
<feature type="active site" description="Charge relay system" evidence="1">
    <location>
        <position position="155"/>
    </location>
</feature>
<feature type="active site" description="Acyl-ester intermediate" evidence="1">
    <location>
        <position position="179"/>
    </location>
</feature>
<proteinExistence type="inferred from homology"/>
<reference key="1">
    <citation type="journal article" date="2009" name="PLoS ONE">
        <title>Non mycobacterial virulence genes in the genome of the emerging pathogen Mycobacterium abscessus.</title>
        <authorList>
            <person name="Ripoll F."/>
            <person name="Pasek S."/>
            <person name="Schenowitz C."/>
            <person name="Dossat C."/>
            <person name="Barbe V."/>
            <person name="Rottman M."/>
            <person name="Macheras E."/>
            <person name="Heym B."/>
            <person name="Herrmann J.L."/>
            <person name="Daffe M."/>
            <person name="Brosch R."/>
            <person name="Risler J.L."/>
            <person name="Gaillard J.L."/>
        </authorList>
    </citation>
    <scope>NUCLEOTIDE SEQUENCE [LARGE SCALE GENOMIC DNA]</scope>
    <source>
        <strain>ATCC 19977 / DSM 44196 / CCUG 20993 / CIP 104536 / JCM 13569 / NCTC 13031 / TMC 1543 / L948</strain>
    </source>
</reference>
<gene>
    <name evidence="1" type="primary">gatA</name>
    <name type="ordered locus">MAB_3341c</name>
</gene>
<dbReference type="EC" id="6.3.5.7" evidence="1"/>
<dbReference type="EMBL" id="CU458896">
    <property type="protein sequence ID" value="CAM63417.1"/>
    <property type="molecule type" value="Genomic_DNA"/>
</dbReference>
<dbReference type="RefSeq" id="WP_005081368.1">
    <property type="nucleotide sequence ID" value="NZ_MLCG01000001.1"/>
</dbReference>
<dbReference type="SMR" id="B1MDU8"/>
<dbReference type="GeneID" id="93380277"/>
<dbReference type="KEGG" id="mab:MAB_3341c"/>
<dbReference type="Proteomes" id="UP000007137">
    <property type="component" value="Chromosome"/>
</dbReference>
<dbReference type="GO" id="GO:0030956">
    <property type="term" value="C:glutamyl-tRNA(Gln) amidotransferase complex"/>
    <property type="evidence" value="ECO:0007669"/>
    <property type="project" value="InterPro"/>
</dbReference>
<dbReference type="GO" id="GO:0005524">
    <property type="term" value="F:ATP binding"/>
    <property type="evidence" value="ECO:0007669"/>
    <property type="project" value="UniProtKB-KW"/>
</dbReference>
<dbReference type="GO" id="GO:0050567">
    <property type="term" value="F:glutaminyl-tRNA synthase (glutamine-hydrolyzing) activity"/>
    <property type="evidence" value="ECO:0007669"/>
    <property type="project" value="UniProtKB-UniRule"/>
</dbReference>
<dbReference type="GO" id="GO:0006412">
    <property type="term" value="P:translation"/>
    <property type="evidence" value="ECO:0007669"/>
    <property type="project" value="UniProtKB-UniRule"/>
</dbReference>
<dbReference type="Gene3D" id="3.90.1300.10">
    <property type="entry name" value="Amidase signature (AS) domain"/>
    <property type="match status" value="1"/>
</dbReference>
<dbReference type="HAMAP" id="MF_00120">
    <property type="entry name" value="GatA"/>
    <property type="match status" value="1"/>
</dbReference>
<dbReference type="InterPro" id="IPR000120">
    <property type="entry name" value="Amidase"/>
</dbReference>
<dbReference type="InterPro" id="IPR020556">
    <property type="entry name" value="Amidase_CS"/>
</dbReference>
<dbReference type="InterPro" id="IPR023631">
    <property type="entry name" value="Amidase_dom"/>
</dbReference>
<dbReference type="InterPro" id="IPR036928">
    <property type="entry name" value="AS_sf"/>
</dbReference>
<dbReference type="InterPro" id="IPR004412">
    <property type="entry name" value="GatA"/>
</dbReference>
<dbReference type="NCBIfam" id="TIGR00132">
    <property type="entry name" value="gatA"/>
    <property type="match status" value="1"/>
</dbReference>
<dbReference type="PANTHER" id="PTHR11895:SF151">
    <property type="entry name" value="GLUTAMYL-TRNA(GLN) AMIDOTRANSFERASE SUBUNIT A"/>
    <property type="match status" value="1"/>
</dbReference>
<dbReference type="PANTHER" id="PTHR11895">
    <property type="entry name" value="TRANSAMIDASE"/>
    <property type="match status" value="1"/>
</dbReference>
<dbReference type="Pfam" id="PF01425">
    <property type="entry name" value="Amidase"/>
    <property type="match status" value="1"/>
</dbReference>
<dbReference type="SUPFAM" id="SSF75304">
    <property type="entry name" value="Amidase signature (AS) enzymes"/>
    <property type="match status" value="1"/>
</dbReference>
<dbReference type="PROSITE" id="PS00571">
    <property type="entry name" value="AMIDASES"/>
    <property type="match status" value="1"/>
</dbReference>
<sequence>MTDLIRQDAAALAALIHSGEVSSVEVTRAHLDQIASTDETYRAFLHVAGEQALAAAKDVDDAIAAGSVPSGLAGVPLALKDVFTTRDMPTTCGSKILENWVPPYDATVTARLRGAGIPILGKTNMDEFAMGSSTENSAYGPTRNPWDVERVPGGSGGGSAAALAAFQAPLAIGTDTGGSIRQPAALTATVGVKPTYGTVSRFGLVACASSLDQGGPCARTVLDTALLHQVIAGHDPRDSTSVDEPVPDVVAAARAGASGDLKGVRVGVVTQLRGDGYQPGVMASFDAAVEQLTALGADVVEVSCPHFEYALPAYYLILPSEVSSNLARFDAMRYGMRVGDDGTHSAEEVMALTRAAGFGPEVKRRIMIGTYALSAGYYDAYYGRAQKVRTLIKRDLERAYEQVDVLVTPATPTTAFRLGEKVDDPLAMYQFDLCTLPLNLAGHCGMSVPSGLSADDGLPVGLQIMAPALADDRLYRVGAAYETARGALPAAL</sequence>